<evidence type="ECO:0000255" key="1">
    <source>
        <dbReference type="HAMAP-Rule" id="MF_00523"/>
    </source>
</evidence>
<keyword id="KW-0012">Acyltransferase</keyword>
<keyword id="KW-0441">Lipid A biosynthesis</keyword>
<keyword id="KW-0444">Lipid biosynthesis</keyword>
<keyword id="KW-0443">Lipid metabolism</keyword>
<keyword id="KW-0677">Repeat</keyword>
<keyword id="KW-0808">Transferase</keyword>
<name>LPXD_BURO0</name>
<comment type="function">
    <text evidence="1">Catalyzes the N-acylation of UDP-3-O-acylglucosamine using 3-hydroxyacyl-ACP as the acyl donor. Is involved in the biosynthesis of lipid A, a phosphorylated glycolipid that anchors the lipopolysaccharide to the outer membrane of the cell.</text>
</comment>
<comment type="catalytic activity">
    <reaction evidence="1">
        <text>a UDP-3-O-[(3R)-3-hydroxyacyl]-alpha-D-glucosamine + a (3R)-hydroxyacyl-[ACP] = a UDP-2-N,3-O-bis[(3R)-3-hydroxyacyl]-alpha-D-glucosamine + holo-[ACP] + H(+)</text>
        <dbReference type="Rhea" id="RHEA:53836"/>
        <dbReference type="Rhea" id="RHEA-COMP:9685"/>
        <dbReference type="Rhea" id="RHEA-COMP:9945"/>
        <dbReference type="ChEBI" id="CHEBI:15378"/>
        <dbReference type="ChEBI" id="CHEBI:64479"/>
        <dbReference type="ChEBI" id="CHEBI:78827"/>
        <dbReference type="ChEBI" id="CHEBI:137740"/>
        <dbReference type="ChEBI" id="CHEBI:137748"/>
        <dbReference type="EC" id="2.3.1.191"/>
    </reaction>
</comment>
<comment type="pathway">
    <text evidence="1">Bacterial outer membrane biogenesis; LPS lipid A biosynthesis.</text>
</comment>
<comment type="subunit">
    <text evidence="1">Homotrimer.</text>
</comment>
<comment type="similarity">
    <text evidence="1">Belongs to the transferase hexapeptide repeat family. LpxD subfamily.</text>
</comment>
<proteinExistence type="inferred from homology"/>
<reference key="1">
    <citation type="submission" date="2008-02" db="EMBL/GenBank/DDBJ databases">
        <title>Complete sequence of chromosome 1 of Burkholderia cenocepacia MC0-3.</title>
        <authorList>
            <person name="Copeland A."/>
            <person name="Lucas S."/>
            <person name="Lapidus A."/>
            <person name="Barry K."/>
            <person name="Bruce D."/>
            <person name="Goodwin L."/>
            <person name="Glavina del Rio T."/>
            <person name="Dalin E."/>
            <person name="Tice H."/>
            <person name="Pitluck S."/>
            <person name="Chain P."/>
            <person name="Malfatti S."/>
            <person name="Shin M."/>
            <person name="Vergez L."/>
            <person name="Schmutz J."/>
            <person name="Larimer F."/>
            <person name="Land M."/>
            <person name="Hauser L."/>
            <person name="Kyrpides N."/>
            <person name="Mikhailova N."/>
            <person name="Tiedje J."/>
            <person name="Richardson P."/>
        </authorList>
    </citation>
    <scope>NUCLEOTIDE SEQUENCE [LARGE SCALE GENOMIC DNA]</scope>
    <source>
        <strain>MC0-3</strain>
    </source>
</reference>
<accession>B1JUE0</accession>
<dbReference type="EC" id="2.3.1.191" evidence="1"/>
<dbReference type="EMBL" id="CP000958">
    <property type="protein sequence ID" value="ACA91190.1"/>
    <property type="molecule type" value="Genomic_DNA"/>
</dbReference>
<dbReference type="RefSeq" id="WP_012328756.1">
    <property type="nucleotide sequence ID" value="NC_010508.1"/>
</dbReference>
<dbReference type="SMR" id="B1JUE0"/>
<dbReference type="GeneID" id="83048806"/>
<dbReference type="KEGG" id="bcm:Bcenmc03_2029"/>
<dbReference type="HOGENOM" id="CLU_049865_0_0_4"/>
<dbReference type="UniPathway" id="UPA00973"/>
<dbReference type="Proteomes" id="UP000002169">
    <property type="component" value="Chromosome 1"/>
</dbReference>
<dbReference type="GO" id="GO:0016020">
    <property type="term" value="C:membrane"/>
    <property type="evidence" value="ECO:0007669"/>
    <property type="project" value="GOC"/>
</dbReference>
<dbReference type="GO" id="GO:0016410">
    <property type="term" value="F:N-acyltransferase activity"/>
    <property type="evidence" value="ECO:0007669"/>
    <property type="project" value="InterPro"/>
</dbReference>
<dbReference type="GO" id="GO:0009245">
    <property type="term" value="P:lipid A biosynthetic process"/>
    <property type="evidence" value="ECO:0007669"/>
    <property type="project" value="UniProtKB-UniRule"/>
</dbReference>
<dbReference type="CDD" id="cd03352">
    <property type="entry name" value="LbH_LpxD"/>
    <property type="match status" value="1"/>
</dbReference>
<dbReference type="Gene3D" id="1.20.5.170">
    <property type="match status" value="1"/>
</dbReference>
<dbReference type="Gene3D" id="2.160.10.10">
    <property type="entry name" value="Hexapeptide repeat proteins"/>
    <property type="match status" value="1"/>
</dbReference>
<dbReference type="Gene3D" id="3.40.1390.10">
    <property type="entry name" value="MurE/MurF, N-terminal domain"/>
    <property type="match status" value="1"/>
</dbReference>
<dbReference type="HAMAP" id="MF_00523">
    <property type="entry name" value="LpxD"/>
    <property type="match status" value="1"/>
</dbReference>
<dbReference type="InterPro" id="IPR001451">
    <property type="entry name" value="Hexapep"/>
</dbReference>
<dbReference type="InterPro" id="IPR018357">
    <property type="entry name" value="Hexapep_transf_CS"/>
</dbReference>
<dbReference type="InterPro" id="IPR007691">
    <property type="entry name" value="LpxD"/>
</dbReference>
<dbReference type="InterPro" id="IPR011004">
    <property type="entry name" value="Trimer_LpxA-like_sf"/>
</dbReference>
<dbReference type="InterPro" id="IPR020573">
    <property type="entry name" value="UDP_GlcNAc_AcTrfase_non-rep"/>
</dbReference>
<dbReference type="NCBIfam" id="TIGR01853">
    <property type="entry name" value="lipid_A_lpxD"/>
    <property type="match status" value="1"/>
</dbReference>
<dbReference type="NCBIfam" id="NF002060">
    <property type="entry name" value="PRK00892.1"/>
    <property type="match status" value="1"/>
</dbReference>
<dbReference type="PANTHER" id="PTHR43378">
    <property type="entry name" value="UDP-3-O-ACYLGLUCOSAMINE N-ACYLTRANSFERASE"/>
    <property type="match status" value="1"/>
</dbReference>
<dbReference type="PANTHER" id="PTHR43378:SF2">
    <property type="entry name" value="UDP-3-O-ACYLGLUCOSAMINE N-ACYLTRANSFERASE 1, MITOCHONDRIAL-RELATED"/>
    <property type="match status" value="1"/>
</dbReference>
<dbReference type="Pfam" id="PF00132">
    <property type="entry name" value="Hexapep"/>
    <property type="match status" value="2"/>
</dbReference>
<dbReference type="Pfam" id="PF14602">
    <property type="entry name" value="Hexapep_2"/>
    <property type="match status" value="1"/>
</dbReference>
<dbReference type="Pfam" id="PF04613">
    <property type="entry name" value="LpxD"/>
    <property type="match status" value="1"/>
</dbReference>
<dbReference type="SUPFAM" id="SSF51161">
    <property type="entry name" value="Trimeric LpxA-like enzymes"/>
    <property type="match status" value="1"/>
</dbReference>
<dbReference type="PROSITE" id="PS00101">
    <property type="entry name" value="HEXAPEP_TRANSFERASES"/>
    <property type="match status" value="3"/>
</dbReference>
<feature type="chain" id="PRO_1000127664" description="UDP-3-O-acylglucosamine N-acyltransferase">
    <location>
        <begin position="1"/>
        <end position="364"/>
    </location>
</feature>
<feature type="active site" description="Proton acceptor" evidence="1">
    <location>
        <position position="258"/>
    </location>
</feature>
<gene>
    <name evidence="1" type="primary">lpxD</name>
    <name type="ordered locus">Bcenmc03_2029</name>
</gene>
<organism>
    <name type="scientific">Burkholderia orbicola (strain MC0-3)</name>
    <dbReference type="NCBI Taxonomy" id="406425"/>
    <lineage>
        <taxon>Bacteria</taxon>
        <taxon>Pseudomonadati</taxon>
        <taxon>Pseudomonadota</taxon>
        <taxon>Betaproteobacteria</taxon>
        <taxon>Burkholderiales</taxon>
        <taxon>Burkholderiaceae</taxon>
        <taxon>Burkholderia</taxon>
        <taxon>Burkholderia cepacia complex</taxon>
        <taxon>Burkholderia orbicola</taxon>
    </lineage>
</organism>
<sequence>MALTLEELVKRFGGEIAGDAQCKVGGLAPLDQAGPQQLAFLANPKYLSQVESTRAGAVLIAPKDLEKLGAAAQGRTAGPRNFIVTPNPYAYFARVAQMFIDLATPPRAAGVHPSATIDPAAQVAATAVIGPHVTIEAGAVIEDGVQLDANVFVGRGTTIGAGSHFYPNASVYHGCKVGPRAIVHAGAVIGSDGFGFAPDFVGDGDARTGSWVKIPQVGGVTIGPDVEIGANTTIDRGAMADTVIEECVKIDNQVQIGHNCRIGAYTVIAGSAGIAGSTTIGRHCMIGGAAGIAGHVTLGDYVIITAKSGVSKSLPKAGIYTSAFPAVDHGEWNKSAALVRNLDKLRERIKALEAALAAQGGTDA</sequence>
<protein>
    <recommendedName>
        <fullName evidence="1">UDP-3-O-acylglucosamine N-acyltransferase</fullName>
        <ecNumber evidence="1">2.3.1.191</ecNumber>
    </recommendedName>
</protein>